<keyword id="KW-0071">Autoinducer synthesis</keyword>
<keyword id="KW-0408">Iron</keyword>
<keyword id="KW-0456">Lyase</keyword>
<keyword id="KW-0479">Metal-binding</keyword>
<keyword id="KW-0673">Quorum sensing</keyword>
<keyword id="KW-1185">Reference proteome</keyword>
<evidence type="ECO:0000255" key="1">
    <source>
        <dbReference type="HAMAP-Rule" id="MF_00091"/>
    </source>
</evidence>
<reference key="1">
    <citation type="journal article" date="2005" name="Proc. Natl. Acad. Sci. U.S.A.">
        <title>Whole genome sequence of Staphylococcus saprophyticus reveals the pathogenesis of uncomplicated urinary tract infection.</title>
        <authorList>
            <person name="Kuroda M."/>
            <person name="Yamashita A."/>
            <person name="Hirakawa H."/>
            <person name="Kumano M."/>
            <person name="Morikawa K."/>
            <person name="Higashide M."/>
            <person name="Maruyama A."/>
            <person name="Inose Y."/>
            <person name="Matoba K."/>
            <person name="Toh H."/>
            <person name="Kuhara S."/>
            <person name="Hattori M."/>
            <person name="Ohta T."/>
        </authorList>
    </citation>
    <scope>NUCLEOTIDE SEQUENCE [LARGE SCALE GENOMIC DNA]</scope>
    <source>
        <strain>ATCC 15305 / DSM 20229 / NCIMB 8711 / NCTC 7292 / S-41</strain>
    </source>
</reference>
<accession>Q49Z80</accession>
<sequence length="156" mass="17568">MPKMNVESFNLDHTIVVAPFVRLAGKMEGANGDVIHKYDIRFKQPNKEHMDMPGLHSLEHLMAENIRNHSDKVVDISPMGCQTGFYVSFINHDDYEDVLNIIEATIKDVLNATEVPACNEVQCGWAASHSLEGAKEIAQTFLDKKAEWHDIYGEAQ</sequence>
<dbReference type="EC" id="4.4.1.21" evidence="1"/>
<dbReference type="EMBL" id="AP008934">
    <property type="protein sequence ID" value="BAE17896.1"/>
    <property type="molecule type" value="Genomic_DNA"/>
</dbReference>
<dbReference type="RefSeq" id="WP_002482698.1">
    <property type="nucleotide sequence ID" value="NZ_MTGA01000032.1"/>
</dbReference>
<dbReference type="SMR" id="Q49Z80"/>
<dbReference type="KEGG" id="ssp:SSP0751"/>
<dbReference type="eggNOG" id="COG1854">
    <property type="taxonomic scope" value="Bacteria"/>
</dbReference>
<dbReference type="HOGENOM" id="CLU_107531_2_0_9"/>
<dbReference type="OrthoDB" id="9788129at2"/>
<dbReference type="Proteomes" id="UP000006371">
    <property type="component" value="Chromosome"/>
</dbReference>
<dbReference type="GO" id="GO:0005506">
    <property type="term" value="F:iron ion binding"/>
    <property type="evidence" value="ECO:0007669"/>
    <property type="project" value="InterPro"/>
</dbReference>
<dbReference type="GO" id="GO:0043768">
    <property type="term" value="F:S-ribosylhomocysteine lyase activity"/>
    <property type="evidence" value="ECO:0007669"/>
    <property type="project" value="UniProtKB-UniRule"/>
</dbReference>
<dbReference type="GO" id="GO:0009372">
    <property type="term" value="P:quorum sensing"/>
    <property type="evidence" value="ECO:0007669"/>
    <property type="project" value="UniProtKB-UniRule"/>
</dbReference>
<dbReference type="Gene3D" id="3.30.1360.80">
    <property type="entry name" value="S-ribosylhomocysteinase (LuxS)"/>
    <property type="match status" value="1"/>
</dbReference>
<dbReference type="HAMAP" id="MF_00091">
    <property type="entry name" value="LuxS"/>
    <property type="match status" value="1"/>
</dbReference>
<dbReference type="InterPro" id="IPR037005">
    <property type="entry name" value="LuxS_sf"/>
</dbReference>
<dbReference type="InterPro" id="IPR011249">
    <property type="entry name" value="Metalloenz_LuxS/M16"/>
</dbReference>
<dbReference type="InterPro" id="IPR003815">
    <property type="entry name" value="S-ribosylhomocysteinase"/>
</dbReference>
<dbReference type="NCBIfam" id="NF002604">
    <property type="entry name" value="PRK02260.1-4"/>
    <property type="match status" value="1"/>
</dbReference>
<dbReference type="PANTHER" id="PTHR35799">
    <property type="entry name" value="S-RIBOSYLHOMOCYSTEINE LYASE"/>
    <property type="match status" value="1"/>
</dbReference>
<dbReference type="PANTHER" id="PTHR35799:SF1">
    <property type="entry name" value="S-RIBOSYLHOMOCYSTEINE LYASE"/>
    <property type="match status" value="1"/>
</dbReference>
<dbReference type="Pfam" id="PF02664">
    <property type="entry name" value="LuxS"/>
    <property type="match status" value="1"/>
</dbReference>
<dbReference type="PIRSF" id="PIRSF006160">
    <property type="entry name" value="AI2"/>
    <property type="match status" value="1"/>
</dbReference>
<dbReference type="PRINTS" id="PR01487">
    <property type="entry name" value="LUXSPROTEIN"/>
</dbReference>
<dbReference type="SUPFAM" id="SSF63411">
    <property type="entry name" value="LuxS/MPP-like metallohydrolase"/>
    <property type="match status" value="1"/>
</dbReference>
<comment type="function">
    <text evidence="1">Involved in the synthesis of autoinducer 2 (AI-2) which is secreted by bacteria and is used to communicate both the cell density and the metabolic potential of the environment. The regulation of gene expression in response to changes in cell density is called quorum sensing. Catalyzes the transformation of S-ribosylhomocysteine (RHC) to homocysteine (HC) and 4,5-dihydroxy-2,3-pentadione (DPD).</text>
</comment>
<comment type="catalytic activity">
    <reaction evidence="1">
        <text>S-(5-deoxy-D-ribos-5-yl)-L-homocysteine = (S)-4,5-dihydroxypentane-2,3-dione + L-homocysteine</text>
        <dbReference type="Rhea" id="RHEA:17753"/>
        <dbReference type="ChEBI" id="CHEBI:29484"/>
        <dbReference type="ChEBI" id="CHEBI:58195"/>
        <dbReference type="ChEBI" id="CHEBI:58199"/>
        <dbReference type="EC" id="4.4.1.21"/>
    </reaction>
</comment>
<comment type="cofactor">
    <cofactor evidence="1">
        <name>Fe cation</name>
        <dbReference type="ChEBI" id="CHEBI:24875"/>
    </cofactor>
    <text evidence="1">Binds 1 Fe cation per subunit.</text>
</comment>
<comment type="subunit">
    <text evidence="1">Homodimer.</text>
</comment>
<comment type="similarity">
    <text evidence="1">Belongs to the LuxS family.</text>
</comment>
<name>LUXS_STAS1</name>
<feature type="chain" id="PRO_0000298039" description="S-ribosylhomocysteine lyase">
    <location>
        <begin position="1"/>
        <end position="156"/>
    </location>
</feature>
<feature type="binding site" evidence="1">
    <location>
        <position position="56"/>
    </location>
    <ligand>
        <name>Fe cation</name>
        <dbReference type="ChEBI" id="CHEBI:24875"/>
    </ligand>
</feature>
<feature type="binding site" evidence="1">
    <location>
        <position position="60"/>
    </location>
    <ligand>
        <name>Fe cation</name>
        <dbReference type="ChEBI" id="CHEBI:24875"/>
    </ligand>
</feature>
<feature type="binding site" evidence="1">
    <location>
        <position position="123"/>
    </location>
    <ligand>
        <name>Fe cation</name>
        <dbReference type="ChEBI" id="CHEBI:24875"/>
    </ligand>
</feature>
<protein>
    <recommendedName>
        <fullName evidence="1">S-ribosylhomocysteine lyase</fullName>
        <ecNumber evidence="1">4.4.1.21</ecNumber>
    </recommendedName>
    <alternativeName>
        <fullName evidence="1">AI-2 synthesis protein</fullName>
    </alternativeName>
    <alternativeName>
        <fullName evidence="1">Autoinducer-2 production protein LuxS</fullName>
    </alternativeName>
</protein>
<proteinExistence type="inferred from homology"/>
<organism>
    <name type="scientific">Staphylococcus saprophyticus subsp. saprophyticus (strain ATCC 15305 / DSM 20229 / NCIMB 8711 / NCTC 7292 / S-41)</name>
    <dbReference type="NCBI Taxonomy" id="342451"/>
    <lineage>
        <taxon>Bacteria</taxon>
        <taxon>Bacillati</taxon>
        <taxon>Bacillota</taxon>
        <taxon>Bacilli</taxon>
        <taxon>Bacillales</taxon>
        <taxon>Staphylococcaceae</taxon>
        <taxon>Staphylococcus</taxon>
    </lineage>
</organism>
<gene>
    <name evidence="1" type="primary">luxS</name>
    <name type="ordered locus">SSP0751</name>
</gene>